<organism>
    <name type="scientific">Staphylococcus aureus (strain MRSA252)</name>
    <dbReference type="NCBI Taxonomy" id="282458"/>
    <lineage>
        <taxon>Bacteria</taxon>
        <taxon>Bacillati</taxon>
        <taxon>Bacillota</taxon>
        <taxon>Bacilli</taxon>
        <taxon>Bacillales</taxon>
        <taxon>Staphylococcaceae</taxon>
        <taxon>Staphylococcus</taxon>
    </lineage>
</organism>
<comment type="function">
    <text evidence="1">DNA-binding global transcriptional regulator which is involved in the adaptive response to starvation and acts by directly or indirectly controlling the expression of numerous genes in response to nutrient availability. During rapid exponential growth, CodY is highly active and represses genes whose products allow adaptation to nutrient depletion.</text>
</comment>
<comment type="subcellular location">
    <subcellularLocation>
        <location evidence="1">Cytoplasm</location>
    </subcellularLocation>
</comment>
<comment type="similarity">
    <text evidence="1">Belongs to the CodY family.</text>
</comment>
<evidence type="ECO:0000255" key="1">
    <source>
        <dbReference type="HAMAP-Rule" id="MF_00621"/>
    </source>
</evidence>
<name>CODY_STAAR</name>
<dbReference type="EMBL" id="BX571856">
    <property type="protein sequence ID" value="CAG40233.1"/>
    <property type="molecule type" value="Genomic_DNA"/>
</dbReference>
<dbReference type="RefSeq" id="WP_000055337.1">
    <property type="nucleotide sequence ID" value="NC_002952.2"/>
</dbReference>
<dbReference type="SMR" id="Q6GHI0"/>
<dbReference type="KEGG" id="sar:SAR1231"/>
<dbReference type="HOGENOM" id="CLU_089581_0_0_9"/>
<dbReference type="Proteomes" id="UP000000596">
    <property type="component" value="Chromosome"/>
</dbReference>
<dbReference type="GO" id="GO:0005737">
    <property type="term" value="C:cytoplasm"/>
    <property type="evidence" value="ECO:0007669"/>
    <property type="project" value="UniProtKB-SubCell"/>
</dbReference>
<dbReference type="GO" id="GO:0003677">
    <property type="term" value="F:DNA binding"/>
    <property type="evidence" value="ECO:0007669"/>
    <property type="project" value="UniProtKB-UniRule"/>
</dbReference>
<dbReference type="GO" id="GO:0003700">
    <property type="term" value="F:DNA-binding transcription factor activity"/>
    <property type="evidence" value="ECO:0007669"/>
    <property type="project" value="InterPro"/>
</dbReference>
<dbReference type="GO" id="GO:0005525">
    <property type="term" value="F:GTP binding"/>
    <property type="evidence" value="ECO:0007669"/>
    <property type="project" value="InterPro"/>
</dbReference>
<dbReference type="GO" id="GO:0045892">
    <property type="term" value="P:negative regulation of DNA-templated transcription"/>
    <property type="evidence" value="ECO:0007669"/>
    <property type="project" value="UniProtKB-UniRule"/>
</dbReference>
<dbReference type="FunFam" id="1.10.10.10:FF:000034">
    <property type="entry name" value="GTP-sensing transcriptional pleiotropic repressor CodY"/>
    <property type="match status" value="1"/>
</dbReference>
<dbReference type="FunFam" id="3.30.450.40:FF:000003">
    <property type="entry name" value="GTP-sensing transcriptional pleiotropic repressor CodY"/>
    <property type="match status" value="1"/>
</dbReference>
<dbReference type="Gene3D" id="3.30.450.40">
    <property type="match status" value="1"/>
</dbReference>
<dbReference type="Gene3D" id="1.10.10.10">
    <property type="entry name" value="Winged helix-like DNA-binding domain superfamily/Winged helix DNA-binding domain"/>
    <property type="match status" value="1"/>
</dbReference>
<dbReference type="HAMAP" id="MF_00621">
    <property type="entry name" value="HTH_type_CodY"/>
    <property type="match status" value="1"/>
</dbReference>
<dbReference type="InterPro" id="IPR014154">
    <property type="entry name" value="CodY"/>
</dbReference>
<dbReference type="InterPro" id="IPR029016">
    <property type="entry name" value="GAF-like_dom_sf"/>
</dbReference>
<dbReference type="InterPro" id="IPR013198">
    <property type="entry name" value="GTP_trans_reg_CodY_C"/>
</dbReference>
<dbReference type="InterPro" id="IPR010312">
    <property type="entry name" value="Transc_reg_CodY_N"/>
</dbReference>
<dbReference type="InterPro" id="IPR036388">
    <property type="entry name" value="WH-like_DNA-bd_sf"/>
</dbReference>
<dbReference type="InterPro" id="IPR036390">
    <property type="entry name" value="WH_DNA-bd_sf"/>
</dbReference>
<dbReference type="NCBIfam" id="TIGR02787">
    <property type="entry name" value="codY_Gpos"/>
    <property type="match status" value="1"/>
</dbReference>
<dbReference type="NCBIfam" id="NF003170">
    <property type="entry name" value="PRK04158.1"/>
    <property type="match status" value="1"/>
</dbReference>
<dbReference type="PANTHER" id="PTHR40062:SF1">
    <property type="entry name" value="GLOBAL TRANSCRIPTIONAL REGULATOR CODY"/>
    <property type="match status" value="1"/>
</dbReference>
<dbReference type="PANTHER" id="PTHR40062">
    <property type="entry name" value="GTP-SENSING TRANSCRIPTIONAL PLEIOTROPIC REPRESSOR CODY"/>
    <property type="match status" value="1"/>
</dbReference>
<dbReference type="Pfam" id="PF06018">
    <property type="entry name" value="CodY"/>
    <property type="match status" value="1"/>
</dbReference>
<dbReference type="Pfam" id="PF08222">
    <property type="entry name" value="HTH_CodY"/>
    <property type="match status" value="1"/>
</dbReference>
<dbReference type="PIRSF" id="PIRSF011572">
    <property type="entry name" value="GTP_sensing_CodY"/>
    <property type="match status" value="1"/>
</dbReference>
<dbReference type="SUPFAM" id="SSF46785">
    <property type="entry name" value="Winged helix' DNA-binding domain"/>
    <property type="match status" value="1"/>
</dbReference>
<protein>
    <recommendedName>
        <fullName evidence="1">Global transcriptional regulator CodY</fullName>
    </recommendedName>
</protein>
<accession>Q6GHI0</accession>
<keyword id="KW-0963">Cytoplasm</keyword>
<keyword id="KW-0238">DNA-binding</keyword>
<keyword id="KW-0678">Repressor</keyword>
<keyword id="KW-0804">Transcription</keyword>
<keyword id="KW-0805">Transcription regulation</keyword>
<reference key="1">
    <citation type="journal article" date="2004" name="Proc. Natl. Acad. Sci. U.S.A.">
        <title>Complete genomes of two clinical Staphylococcus aureus strains: evidence for the rapid evolution of virulence and drug resistance.</title>
        <authorList>
            <person name="Holden M.T.G."/>
            <person name="Feil E.J."/>
            <person name="Lindsay J.A."/>
            <person name="Peacock S.J."/>
            <person name="Day N.P.J."/>
            <person name="Enright M.C."/>
            <person name="Foster T.J."/>
            <person name="Moore C.E."/>
            <person name="Hurst L."/>
            <person name="Atkin R."/>
            <person name="Barron A."/>
            <person name="Bason N."/>
            <person name="Bentley S.D."/>
            <person name="Chillingworth C."/>
            <person name="Chillingworth T."/>
            <person name="Churcher C."/>
            <person name="Clark L."/>
            <person name="Corton C."/>
            <person name="Cronin A."/>
            <person name="Doggett J."/>
            <person name="Dowd L."/>
            <person name="Feltwell T."/>
            <person name="Hance Z."/>
            <person name="Harris B."/>
            <person name="Hauser H."/>
            <person name="Holroyd S."/>
            <person name="Jagels K."/>
            <person name="James K.D."/>
            <person name="Lennard N."/>
            <person name="Line A."/>
            <person name="Mayes R."/>
            <person name="Moule S."/>
            <person name="Mungall K."/>
            <person name="Ormond D."/>
            <person name="Quail M.A."/>
            <person name="Rabbinowitsch E."/>
            <person name="Rutherford K.M."/>
            <person name="Sanders M."/>
            <person name="Sharp S."/>
            <person name="Simmonds M."/>
            <person name="Stevens K."/>
            <person name="Whitehead S."/>
            <person name="Barrell B.G."/>
            <person name="Spratt B.G."/>
            <person name="Parkhill J."/>
        </authorList>
    </citation>
    <scope>NUCLEOTIDE SEQUENCE [LARGE SCALE GENOMIC DNA]</scope>
    <source>
        <strain>MRSA252</strain>
    </source>
</reference>
<sequence length="257" mass="28755">MSLLSKTRELNTLLQKHKGIAVDFKDVAQTISSVTVTNVFIVSRRGKILGSSLNELLKSQRIIQMLEERHIPSEYTERLMEVKQTESNIDIDNVLTVFPPENRELFIDSRTTIFPILGGGERLGTLVLGRVHDDFNENDLVLGEYAATVIGMEILREKHSEVEKEARDKAAITMAINSLSYSEKEAIEHIFEELGGTEGLLIASKVADRVGITRSVIVNALRKLESAGVIESRSLGMKGTFIKVKKEKFLDELEKSK</sequence>
<feature type="chain" id="PRO_0000213234" description="Global transcriptional regulator CodY">
    <location>
        <begin position="1"/>
        <end position="257"/>
    </location>
</feature>
<feature type="DNA-binding region" description="H-T-H motif" evidence="1">
    <location>
        <begin position="203"/>
        <end position="222"/>
    </location>
</feature>
<feature type="region of interest" description="GAF domain" evidence="1">
    <location>
        <begin position="1"/>
        <end position="155"/>
    </location>
</feature>
<proteinExistence type="inferred from homology"/>
<gene>
    <name evidence="1" type="primary">codY</name>
    <name type="ordered locus">SAR1231</name>
</gene>